<name>RL34_CLOBA</name>
<organism>
    <name type="scientific">Clostridium botulinum (strain Alaska E43 / Type E3)</name>
    <dbReference type="NCBI Taxonomy" id="508767"/>
    <lineage>
        <taxon>Bacteria</taxon>
        <taxon>Bacillati</taxon>
        <taxon>Bacillota</taxon>
        <taxon>Clostridia</taxon>
        <taxon>Eubacteriales</taxon>
        <taxon>Clostridiaceae</taxon>
        <taxon>Clostridium</taxon>
    </lineage>
</organism>
<dbReference type="EMBL" id="CP001078">
    <property type="protein sequence ID" value="ACD53612.1"/>
    <property type="molecule type" value="Genomic_DNA"/>
</dbReference>
<dbReference type="RefSeq" id="WP_003373622.1">
    <property type="nucleotide sequence ID" value="NC_010723.1"/>
</dbReference>
<dbReference type="SMR" id="B2V1V4"/>
<dbReference type="KEGG" id="cbt:CLH_3398"/>
<dbReference type="HOGENOM" id="CLU_129938_2_0_9"/>
<dbReference type="GO" id="GO:1990904">
    <property type="term" value="C:ribonucleoprotein complex"/>
    <property type="evidence" value="ECO:0007669"/>
    <property type="project" value="UniProtKB-KW"/>
</dbReference>
<dbReference type="GO" id="GO:0005840">
    <property type="term" value="C:ribosome"/>
    <property type="evidence" value="ECO:0007669"/>
    <property type="project" value="UniProtKB-KW"/>
</dbReference>
<dbReference type="GO" id="GO:0003735">
    <property type="term" value="F:structural constituent of ribosome"/>
    <property type="evidence" value="ECO:0007669"/>
    <property type="project" value="InterPro"/>
</dbReference>
<dbReference type="GO" id="GO:0006412">
    <property type="term" value="P:translation"/>
    <property type="evidence" value="ECO:0007669"/>
    <property type="project" value="UniProtKB-UniRule"/>
</dbReference>
<dbReference type="FunFam" id="1.10.287.3980:FF:000001">
    <property type="entry name" value="Mitochondrial ribosomal protein L34"/>
    <property type="match status" value="1"/>
</dbReference>
<dbReference type="Gene3D" id="1.10.287.3980">
    <property type="match status" value="1"/>
</dbReference>
<dbReference type="HAMAP" id="MF_00391">
    <property type="entry name" value="Ribosomal_bL34"/>
    <property type="match status" value="1"/>
</dbReference>
<dbReference type="InterPro" id="IPR000271">
    <property type="entry name" value="Ribosomal_bL34"/>
</dbReference>
<dbReference type="InterPro" id="IPR020939">
    <property type="entry name" value="Ribosomal_bL34_CS"/>
</dbReference>
<dbReference type="NCBIfam" id="TIGR01030">
    <property type="entry name" value="rpmH_bact"/>
    <property type="match status" value="1"/>
</dbReference>
<dbReference type="PANTHER" id="PTHR14503:SF4">
    <property type="entry name" value="LARGE RIBOSOMAL SUBUNIT PROTEIN BL34M"/>
    <property type="match status" value="1"/>
</dbReference>
<dbReference type="PANTHER" id="PTHR14503">
    <property type="entry name" value="MITOCHONDRIAL RIBOSOMAL PROTEIN 34 FAMILY MEMBER"/>
    <property type="match status" value="1"/>
</dbReference>
<dbReference type="Pfam" id="PF00468">
    <property type="entry name" value="Ribosomal_L34"/>
    <property type="match status" value="1"/>
</dbReference>
<dbReference type="PROSITE" id="PS00784">
    <property type="entry name" value="RIBOSOMAL_L34"/>
    <property type="match status" value="1"/>
</dbReference>
<protein>
    <recommendedName>
        <fullName evidence="1">Large ribosomal subunit protein bL34</fullName>
    </recommendedName>
    <alternativeName>
        <fullName evidence="3">50S ribosomal protein L34</fullName>
    </alternativeName>
</protein>
<comment type="similarity">
    <text evidence="1">Belongs to the bacterial ribosomal protein bL34 family.</text>
</comment>
<gene>
    <name evidence="1" type="primary">rpmH</name>
    <name type="ordered locus">CLH_3398</name>
</gene>
<sequence>MFMTYQPKKRQRKKEHGFRKRMSTQSGRNILRKRRQKGRKKLTA</sequence>
<proteinExistence type="inferred from homology"/>
<reference key="1">
    <citation type="submission" date="2008-05" db="EMBL/GenBank/DDBJ databases">
        <title>Complete genome sequence of Clostridium botulinum E3 str. Alaska E43.</title>
        <authorList>
            <person name="Brinkac L.M."/>
            <person name="Brown J.L."/>
            <person name="Bruce D."/>
            <person name="Detter C."/>
            <person name="Munk C."/>
            <person name="Smith L.A."/>
            <person name="Smith T.J."/>
            <person name="Sutton G."/>
            <person name="Brettin T.S."/>
        </authorList>
    </citation>
    <scope>NUCLEOTIDE SEQUENCE [LARGE SCALE GENOMIC DNA]</scope>
    <source>
        <strain>Alaska E43 / Type E3</strain>
    </source>
</reference>
<feature type="chain" id="PRO_1000196024" description="Large ribosomal subunit protein bL34">
    <location>
        <begin position="1"/>
        <end position="44"/>
    </location>
</feature>
<feature type="region of interest" description="Disordered" evidence="2">
    <location>
        <begin position="1"/>
        <end position="44"/>
    </location>
</feature>
<feature type="compositionally biased region" description="Basic residues" evidence="2">
    <location>
        <begin position="7"/>
        <end position="22"/>
    </location>
</feature>
<feature type="compositionally biased region" description="Basic residues" evidence="2">
    <location>
        <begin position="30"/>
        <end position="44"/>
    </location>
</feature>
<accession>B2V1V4</accession>
<keyword id="KW-0687">Ribonucleoprotein</keyword>
<keyword id="KW-0689">Ribosomal protein</keyword>
<evidence type="ECO:0000255" key="1">
    <source>
        <dbReference type="HAMAP-Rule" id="MF_00391"/>
    </source>
</evidence>
<evidence type="ECO:0000256" key="2">
    <source>
        <dbReference type="SAM" id="MobiDB-lite"/>
    </source>
</evidence>
<evidence type="ECO:0000305" key="3"/>